<comment type="function">
    <text evidence="1">Cell division inhibitor that blocks the formation of polar Z ring septums. Rapidly oscillates between the poles of the cell to destabilize FtsZ filaments that have formed before they mature into polar Z rings. Prevents FtsZ polymerization.</text>
</comment>
<comment type="subunit">
    <text evidence="1">Interacts with MinD and FtsZ.</text>
</comment>
<comment type="similarity">
    <text evidence="1">Belongs to the MinC family.</text>
</comment>
<accession>Q6LT86</accession>
<sequence>MTKMAELKGSSFTLSALHLVDGDIKKATDYLKEKVNQAPNFFASAPVVIDITQAGREINFKQLKEDVKDAGMIPVGVSGCKDARMQNEAKSAGFAIMNAARQAKDMPVTVEPTRIIRTPVRSGQQIYAKNCDLVVMNHVSAGAEIIADGCIHVYGNLRGRAIAGASGQHQAQIFCQNIQSELISIAGNYWLSDKIKAEFWGKGVVISLAENNLNIEHLTL</sequence>
<reference key="1">
    <citation type="journal article" date="2005" name="Science">
        <title>Life at depth: Photobacterium profundum genome sequence and expression analysis.</title>
        <authorList>
            <person name="Vezzi A."/>
            <person name="Campanaro S."/>
            <person name="D'Angelo M."/>
            <person name="Simonato F."/>
            <person name="Vitulo N."/>
            <person name="Lauro F.M."/>
            <person name="Cestaro A."/>
            <person name="Malacrida G."/>
            <person name="Simionati B."/>
            <person name="Cannata N."/>
            <person name="Romualdi C."/>
            <person name="Bartlett D.H."/>
            <person name="Valle G."/>
        </authorList>
    </citation>
    <scope>NUCLEOTIDE SEQUENCE [LARGE SCALE GENOMIC DNA]</scope>
    <source>
        <strain>ATCC BAA-1253 / SS9</strain>
    </source>
</reference>
<name>MINC_PHOPR</name>
<dbReference type="EMBL" id="CR378666">
    <property type="protein sequence ID" value="CAG19490.1"/>
    <property type="molecule type" value="Genomic_DNA"/>
</dbReference>
<dbReference type="RefSeq" id="WP_011217823.1">
    <property type="nucleotide sequence ID" value="NC_006370.1"/>
</dbReference>
<dbReference type="SMR" id="Q6LT86"/>
<dbReference type="STRING" id="298386.PBPRA1079"/>
<dbReference type="KEGG" id="ppr:PBPRA1079"/>
<dbReference type="eggNOG" id="COG0850">
    <property type="taxonomic scope" value="Bacteria"/>
</dbReference>
<dbReference type="HOGENOM" id="CLU_067812_0_1_6"/>
<dbReference type="Proteomes" id="UP000000593">
    <property type="component" value="Chromosome 1"/>
</dbReference>
<dbReference type="GO" id="GO:0000902">
    <property type="term" value="P:cell morphogenesis"/>
    <property type="evidence" value="ECO:0007669"/>
    <property type="project" value="InterPro"/>
</dbReference>
<dbReference type="GO" id="GO:0000917">
    <property type="term" value="P:division septum assembly"/>
    <property type="evidence" value="ECO:0007669"/>
    <property type="project" value="UniProtKB-KW"/>
</dbReference>
<dbReference type="GO" id="GO:0051302">
    <property type="term" value="P:regulation of cell division"/>
    <property type="evidence" value="ECO:0007669"/>
    <property type="project" value="InterPro"/>
</dbReference>
<dbReference type="GO" id="GO:1901891">
    <property type="term" value="P:regulation of cell septum assembly"/>
    <property type="evidence" value="ECO:0007669"/>
    <property type="project" value="InterPro"/>
</dbReference>
<dbReference type="Gene3D" id="2.160.20.70">
    <property type="match status" value="1"/>
</dbReference>
<dbReference type="Gene3D" id="3.30.70.260">
    <property type="match status" value="1"/>
</dbReference>
<dbReference type="HAMAP" id="MF_00267">
    <property type="entry name" value="MinC"/>
    <property type="match status" value="1"/>
</dbReference>
<dbReference type="InterPro" id="IPR016098">
    <property type="entry name" value="CAP/MinC_C"/>
</dbReference>
<dbReference type="InterPro" id="IPR013033">
    <property type="entry name" value="MinC"/>
</dbReference>
<dbReference type="InterPro" id="IPR036145">
    <property type="entry name" value="MinC_C_sf"/>
</dbReference>
<dbReference type="InterPro" id="IPR007874">
    <property type="entry name" value="MinC_N"/>
</dbReference>
<dbReference type="InterPro" id="IPR005526">
    <property type="entry name" value="Septum_form_inhib_MinC_C"/>
</dbReference>
<dbReference type="NCBIfam" id="TIGR01222">
    <property type="entry name" value="minC"/>
    <property type="match status" value="1"/>
</dbReference>
<dbReference type="PANTHER" id="PTHR34108">
    <property type="entry name" value="SEPTUM SITE-DETERMINING PROTEIN MINC"/>
    <property type="match status" value="1"/>
</dbReference>
<dbReference type="PANTHER" id="PTHR34108:SF1">
    <property type="entry name" value="SEPTUM SITE-DETERMINING PROTEIN MINC"/>
    <property type="match status" value="1"/>
</dbReference>
<dbReference type="Pfam" id="PF03775">
    <property type="entry name" value="MinC_C"/>
    <property type="match status" value="1"/>
</dbReference>
<dbReference type="Pfam" id="PF05209">
    <property type="entry name" value="MinC_N"/>
    <property type="match status" value="1"/>
</dbReference>
<dbReference type="SUPFAM" id="SSF63848">
    <property type="entry name" value="Cell-division inhibitor MinC, C-terminal domain"/>
    <property type="match status" value="1"/>
</dbReference>
<evidence type="ECO:0000255" key="1">
    <source>
        <dbReference type="HAMAP-Rule" id="MF_00267"/>
    </source>
</evidence>
<keyword id="KW-0131">Cell cycle</keyword>
<keyword id="KW-0132">Cell division</keyword>
<keyword id="KW-1185">Reference proteome</keyword>
<keyword id="KW-0717">Septation</keyword>
<gene>
    <name evidence="1" type="primary">minC</name>
    <name type="ordered locus">PBPRA1079</name>
</gene>
<proteinExistence type="inferred from homology"/>
<protein>
    <recommendedName>
        <fullName evidence="1">Probable septum site-determining protein MinC</fullName>
    </recommendedName>
</protein>
<feature type="chain" id="PRO_1000047839" description="Probable septum site-determining protein MinC">
    <location>
        <begin position="1"/>
        <end position="220"/>
    </location>
</feature>
<organism>
    <name type="scientific">Photobacterium profundum (strain SS9)</name>
    <dbReference type="NCBI Taxonomy" id="298386"/>
    <lineage>
        <taxon>Bacteria</taxon>
        <taxon>Pseudomonadati</taxon>
        <taxon>Pseudomonadota</taxon>
        <taxon>Gammaproteobacteria</taxon>
        <taxon>Vibrionales</taxon>
        <taxon>Vibrionaceae</taxon>
        <taxon>Photobacterium</taxon>
    </lineage>
</organism>